<sequence length="376" mass="42127">MTEEPEFSLGVEEEYLLVDAETGDLREAPDALMEACKAELADQVGPEFLRCQIEIGTPVAADVAQARDHLARLRGSIARHAAEFGLAPISVACHPVADWRAQGRTDKDRYNQISQEMGGVARRMLICGMHVHVGISDKDMRIDLMNQFSWFLPHLLALSASSPFWLGEDTLLASYRTTVFAGYPRTGLPPRLGSWAEFDRSVEMLTETGIIQDASKIWWDLRPSARFPTLETRVCDACPRLDDAITLVALVQATLRMLWRLSRQNLRWRQYDNFLLGENRWRATRYGSTEGLIDFGSRRILPFDEIAESWLAAIAEDADALDSQPAVAGLRDMIARGSAAERQRALFASAITAGATPQEAFRSIVGWLIDEFRRDL</sequence>
<organism>
    <name type="scientific">Paracoccus denitrificans (strain Pd 1222)</name>
    <dbReference type="NCBI Taxonomy" id="318586"/>
    <lineage>
        <taxon>Bacteria</taxon>
        <taxon>Pseudomonadati</taxon>
        <taxon>Pseudomonadota</taxon>
        <taxon>Alphaproteobacteria</taxon>
        <taxon>Rhodobacterales</taxon>
        <taxon>Paracoccaceae</taxon>
        <taxon>Paracoccus</taxon>
    </lineage>
</organism>
<accession>A1B2I7</accession>
<dbReference type="EC" id="6.3.2.2" evidence="1"/>
<dbReference type="EMBL" id="CP000489">
    <property type="protein sequence ID" value="ABL69731.1"/>
    <property type="molecule type" value="Genomic_DNA"/>
</dbReference>
<dbReference type="RefSeq" id="WP_011747930.1">
    <property type="nucleotide sequence ID" value="NC_008686.1"/>
</dbReference>
<dbReference type="SMR" id="A1B2I7"/>
<dbReference type="STRING" id="318586.Pden_1633"/>
<dbReference type="EnsemblBacteria" id="ABL69731">
    <property type="protein sequence ID" value="ABL69731"/>
    <property type="gene ID" value="Pden_1633"/>
</dbReference>
<dbReference type="GeneID" id="93450024"/>
<dbReference type="KEGG" id="pde:Pden_1633"/>
<dbReference type="eggNOG" id="COG2170">
    <property type="taxonomic scope" value="Bacteria"/>
</dbReference>
<dbReference type="HOGENOM" id="CLU_044848_1_0_5"/>
<dbReference type="OrthoDB" id="9769628at2"/>
<dbReference type="Proteomes" id="UP000000361">
    <property type="component" value="Chromosome 1"/>
</dbReference>
<dbReference type="GO" id="GO:0005524">
    <property type="term" value="F:ATP binding"/>
    <property type="evidence" value="ECO:0007669"/>
    <property type="project" value="UniProtKB-KW"/>
</dbReference>
<dbReference type="GO" id="GO:0004357">
    <property type="term" value="F:glutamate-cysteine ligase activity"/>
    <property type="evidence" value="ECO:0007669"/>
    <property type="project" value="UniProtKB-EC"/>
</dbReference>
<dbReference type="GO" id="GO:0042398">
    <property type="term" value="P:modified amino acid biosynthetic process"/>
    <property type="evidence" value="ECO:0007669"/>
    <property type="project" value="InterPro"/>
</dbReference>
<dbReference type="Gene3D" id="3.30.590.20">
    <property type="match status" value="1"/>
</dbReference>
<dbReference type="HAMAP" id="MF_01609">
    <property type="entry name" value="Glu_cys_ligase_2"/>
    <property type="match status" value="1"/>
</dbReference>
<dbReference type="InterPro" id="IPR050141">
    <property type="entry name" value="GCL_type2/YbdK_subfam"/>
</dbReference>
<dbReference type="InterPro" id="IPR006336">
    <property type="entry name" value="GCS2"/>
</dbReference>
<dbReference type="InterPro" id="IPR014746">
    <property type="entry name" value="Gln_synth/guanido_kin_cat_dom"/>
</dbReference>
<dbReference type="InterPro" id="IPR011793">
    <property type="entry name" value="YbdK"/>
</dbReference>
<dbReference type="NCBIfam" id="TIGR02050">
    <property type="entry name" value="gshA_cyan_rel"/>
    <property type="match status" value="1"/>
</dbReference>
<dbReference type="NCBIfam" id="NF010039">
    <property type="entry name" value="PRK13515.1"/>
    <property type="match status" value="1"/>
</dbReference>
<dbReference type="PANTHER" id="PTHR36510">
    <property type="entry name" value="GLUTAMATE--CYSTEINE LIGASE 2-RELATED"/>
    <property type="match status" value="1"/>
</dbReference>
<dbReference type="PANTHER" id="PTHR36510:SF1">
    <property type="entry name" value="GLUTAMATE--CYSTEINE LIGASE 2-RELATED"/>
    <property type="match status" value="1"/>
</dbReference>
<dbReference type="Pfam" id="PF04107">
    <property type="entry name" value="GCS2"/>
    <property type="match status" value="1"/>
</dbReference>
<dbReference type="SUPFAM" id="SSF55931">
    <property type="entry name" value="Glutamine synthetase/guanido kinase"/>
    <property type="match status" value="1"/>
</dbReference>
<gene>
    <name type="ordered locus">Pden_1633</name>
</gene>
<evidence type="ECO:0000255" key="1">
    <source>
        <dbReference type="HAMAP-Rule" id="MF_01609"/>
    </source>
</evidence>
<keyword id="KW-0067">ATP-binding</keyword>
<keyword id="KW-0436">Ligase</keyword>
<keyword id="KW-0547">Nucleotide-binding</keyword>
<keyword id="KW-1185">Reference proteome</keyword>
<proteinExistence type="inferred from homology"/>
<name>GCS2_PARDP</name>
<reference key="1">
    <citation type="submission" date="2006-12" db="EMBL/GenBank/DDBJ databases">
        <title>Complete sequence of chromosome 1 of Paracoccus denitrificans PD1222.</title>
        <authorList>
            <person name="Copeland A."/>
            <person name="Lucas S."/>
            <person name="Lapidus A."/>
            <person name="Barry K."/>
            <person name="Detter J.C."/>
            <person name="Glavina del Rio T."/>
            <person name="Hammon N."/>
            <person name="Israni S."/>
            <person name="Dalin E."/>
            <person name="Tice H."/>
            <person name="Pitluck S."/>
            <person name="Munk A.C."/>
            <person name="Brettin T."/>
            <person name="Bruce D."/>
            <person name="Han C."/>
            <person name="Tapia R."/>
            <person name="Gilna P."/>
            <person name="Schmutz J."/>
            <person name="Larimer F."/>
            <person name="Land M."/>
            <person name="Hauser L."/>
            <person name="Kyrpides N."/>
            <person name="Lykidis A."/>
            <person name="Spiro S."/>
            <person name="Richardson D.J."/>
            <person name="Moir J.W.B."/>
            <person name="Ferguson S.J."/>
            <person name="van Spanning R.J.M."/>
            <person name="Richardson P."/>
        </authorList>
    </citation>
    <scope>NUCLEOTIDE SEQUENCE [LARGE SCALE GENOMIC DNA]</scope>
    <source>
        <strain>Pd 1222</strain>
    </source>
</reference>
<comment type="function">
    <text evidence="1">ATP-dependent carboxylate-amine ligase which exhibits weak glutamate--cysteine ligase activity.</text>
</comment>
<comment type="catalytic activity">
    <reaction evidence="1">
        <text>L-cysteine + L-glutamate + ATP = gamma-L-glutamyl-L-cysteine + ADP + phosphate + H(+)</text>
        <dbReference type="Rhea" id="RHEA:13285"/>
        <dbReference type="ChEBI" id="CHEBI:15378"/>
        <dbReference type="ChEBI" id="CHEBI:29985"/>
        <dbReference type="ChEBI" id="CHEBI:30616"/>
        <dbReference type="ChEBI" id="CHEBI:35235"/>
        <dbReference type="ChEBI" id="CHEBI:43474"/>
        <dbReference type="ChEBI" id="CHEBI:58173"/>
        <dbReference type="ChEBI" id="CHEBI:456216"/>
        <dbReference type="EC" id="6.3.2.2"/>
    </reaction>
</comment>
<comment type="similarity">
    <text evidence="1">Belongs to the glutamate--cysteine ligase type 2 family. YbdK subfamily.</text>
</comment>
<feature type="chain" id="PRO_0000291506" description="Putative glutamate--cysteine ligase 2">
    <location>
        <begin position="1"/>
        <end position="376"/>
    </location>
</feature>
<protein>
    <recommendedName>
        <fullName evidence="1">Putative glutamate--cysteine ligase 2</fullName>
        <ecNumber evidence="1">6.3.2.2</ecNumber>
    </recommendedName>
    <alternativeName>
        <fullName evidence="1">Gamma-glutamylcysteine synthetase 2</fullName>
        <shortName evidence="1">GCS 2</shortName>
        <shortName evidence="1">Gamma-GCS 2</shortName>
    </alternativeName>
</protein>